<dbReference type="EC" id="3.4.23.36" evidence="1"/>
<dbReference type="EMBL" id="CP000744">
    <property type="protein sequence ID" value="ABR85770.1"/>
    <property type="molecule type" value="Genomic_DNA"/>
</dbReference>
<dbReference type="RefSeq" id="WP_003150009.1">
    <property type="nucleotide sequence ID" value="NC_009656.1"/>
</dbReference>
<dbReference type="SMR" id="A6VBU6"/>
<dbReference type="KEGG" id="pap:PSPA7_5199"/>
<dbReference type="HOGENOM" id="CLU_083252_4_0_6"/>
<dbReference type="UniPathway" id="UPA00665"/>
<dbReference type="Proteomes" id="UP000001582">
    <property type="component" value="Chromosome"/>
</dbReference>
<dbReference type="GO" id="GO:0005886">
    <property type="term" value="C:plasma membrane"/>
    <property type="evidence" value="ECO:0007669"/>
    <property type="project" value="UniProtKB-SubCell"/>
</dbReference>
<dbReference type="GO" id="GO:0004190">
    <property type="term" value="F:aspartic-type endopeptidase activity"/>
    <property type="evidence" value="ECO:0007669"/>
    <property type="project" value="UniProtKB-UniRule"/>
</dbReference>
<dbReference type="GO" id="GO:0006508">
    <property type="term" value="P:proteolysis"/>
    <property type="evidence" value="ECO:0007669"/>
    <property type="project" value="UniProtKB-KW"/>
</dbReference>
<dbReference type="HAMAP" id="MF_00161">
    <property type="entry name" value="LspA"/>
    <property type="match status" value="1"/>
</dbReference>
<dbReference type="InterPro" id="IPR001872">
    <property type="entry name" value="Peptidase_A8"/>
</dbReference>
<dbReference type="NCBIfam" id="TIGR00077">
    <property type="entry name" value="lspA"/>
    <property type="match status" value="1"/>
</dbReference>
<dbReference type="PANTHER" id="PTHR33695">
    <property type="entry name" value="LIPOPROTEIN SIGNAL PEPTIDASE"/>
    <property type="match status" value="1"/>
</dbReference>
<dbReference type="PANTHER" id="PTHR33695:SF1">
    <property type="entry name" value="LIPOPROTEIN SIGNAL PEPTIDASE"/>
    <property type="match status" value="1"/>
</dbReference>
<dbReference type="Pfam" id="PF01252">
    <property type="entry name" value="Peptidase_A8"/>
    <property type="match status" value="1"/>
</dbReference>
<dbReference type="PRINTS" id="PR00781">
    <property type="entry name" value="LIPOSIGPTASE"/>
</dbReference>
<dbReference type="PROSITE" id="PS00855">
    <property type="entry name" value="SPASE_II"/>
    <property type="match status" value="1"/>
</dbReference>
<reference key="1">
    <citation type="submission" date="2007-06" db="EMBL/GenBank/DDBJ databases">
        <authorList>
            <person name="Dodson R.J."/>
            <person name="Harkins D."/>
            <person name="Paulsen I.T."/>
        </authorList>
    </citation>
    <scope>NUCLEOTIDE SEQUENCE [LARGE SCALE GENOMIC DNA]</scope>
    <source>
        <strain>DSM 24068 / PA7</strain>
    </source>
</reference>
<sequence length="169" mass="19009">MPEVDRFGRLPWLWITVLVFVLDQVSKAFFQAELSMYQQVVVIPDLFSWTLAYNTGAAFSFLADSSGWQRWLFALIAIVVSAILVVWLKRLKKGETWLAVALALVLGGALGNLYDRMVLGHVVDFILVHWQNRWYFPAFNLADSAITVGAVMLALDMFRSKKSGEAAHG</sequence>
<organism>
    <name type="scientific">Pseudomonas paraeruginosa (strain DSM 24068 / PA7)</name>
    <name type="common">Pseudomonas aeruginosa (strain PA7)</name>
    <dbReference type="NCBI Taxonomy" id="381754"/>
    <lineage>
        <taxon>Bacteria</taxon>
        <taxon>Pseudomonadati</taxon>
        <taxon>Pseudomonadota</taxon>
        <taxon>Gammaproteobacteria</taxon>
        <taxon>Pseudomonadales</taxon>
        <taxon>Pseudomonadaceae</taxon>
        <taxon>Pseudomonas</taxon>
        <taxon>Pseudomonas paraeruginosa</taxon>
    </lineage>
</organism>
<name>LSPA_PSEP7</name>
<accession>A6VBU6</accession>
<feature type="chain" id="PRO_1000058237" description="Lipoprotein signal peptidase">
    <location>
        <begin position="1"/>
        <end position="169"/>
    </location>
</feature>
<feature type="transmembrane region" description="Helical" evidence="1">
    <location>
        <begin position="10"/>
        <end position="30"/>
    </location>
</feature>
<feature type="transmembrane region" description="Helical" evidence="1">
    <location>
        <begin position="41"/>
        <end position="61"/>
    </location>
</feature>
<feature type="transmembrane region" description="Helical" evidence="1">
    <location>
        <begin position="68"/>
        <end position="88"/>
    </location>
</feature>
<feature type="transmembrane region" description="Helical" evidence="1">
    <location>
        <begin position="94"/>
        <end position="114"/>
    </location>
</feature>
<feature type="transmembrane region" description="Helical" evidence="1">
    <location>
        <begin position="135"/>
        <end position="155"/>
    </location>
</feature>
<feature type="active site" evidence="1">
    <location>
        <position position="124"/>
    </location>
</feature>
<feature type="active site" evidence="1">
    <location>
        <position position="143"/>
    </location>
</feature>
<gene>
    <name evidence="1" type="primary">lspA</name>
    <name type="ordered locus">PSPA7_5199</name>
</gene>
<protein>
    <recommendedName>
        <fullName evidence="1">Lipoprotein signal peptidase</fullName>
        <ecNumber evidence="1">3.4.23.36</ecNumber>
    </recommendedName>
    <alternativeName>
        <fullName evidence="1">Prolipoprotein signal peptidase</fullName>
    </alternativeName>
    <alternativeName>
        <fullName evidence="1">Signal peptidase II</fullName>
        <shortName evidence="1">SPase II</shortName>
    </alternativeName>
</protein>
<keyword id="KW-0064">Aspartyl protease</keyword>
<keyword id="KW-0997">Cell inner membrane</keyword>
<keyword id="KW-1003">Cell membrane</keyword>
<keyword id="KW-0378">Hydrolase</keyword>
<keyword id="KW-0472">Membrane</keyword>
<keyword id="KW-0645">Protease</keyword>
<keyword id="KW-0812">Transmembrane</keyword>
<keyword id="KW-1133">Transmembrane helix</keyword>
<evidence type="ECO:0000255" key="1">
    <source>
        <dbReference type="HAMAP-Rule" id="MF_00161"/>
    </source>
</evidence>
<comment type="function">
    <text evidence="1">This protein specifically catalyzes the removal of signal peptides from prolipoproteins.</text>
</comment>
<comment type="catalytic activity">
    <reaction evidence="1">
        <text>Release of signal peptides from bacterial membrane prolipoproteins. Hydrolyzes -Xaa-Yaa-Zaa-|-(S,diacylglyceryl)Cys-, in which Xaa is hydrophobic (preferably Leu), and Yaa (Ala or Ser) and Zaa (Gly or Ala) have small, neutral side chains.</text>
        <dbReference type="EC" id="3.4.23.36"/>
    </reaction>
</comment>
<comment type="pathway">
    <text evidence="1">Protein modification; lipoprotein biosynthesis (signal peptide cleavage).</text>
</comment>
<comment type="subcellular location">
    <subcellularLocation>
        <location evidence="1">Cell inner membrane</location>
        <topology evidence="1">Multi-pass membrane protein</topology>
    </subcellularLocation>
</comment>
<comment type="similarity">
    <text evidence="1">Belongs to the peptidase A8 family.</text>
</comment>
<proteinExistence type="inferred from homology"/>